<proteinExistence type="inferred from homology"/>
<feature type="chain" id="PRO_0000447372" description="Flowering time control protein FCA">
    <location>
        <begin position="1"/>
        <end position="738"/>
    </location>
</feature>
<feature type="domain" description="RRM 1" evidence="3">
    <location>
        <begin position="122"/>
        <end position="203"/>
    </location>
</feature>
<feature type="domain" description="RRM 2" evidence="3">
    <location>
        <begin position="213"/>
        <end position="293"/>
    </location>
</feature>
<feature type="domain" description="WW" evidence="4">
    <location>
        <begin position="609"/>
        <end position="642"/>
    </location>
</feature>
<feature type="region of interest" description="Disordered" evidence="5">
    <location>
        <begin position="1"/>
        <end position="118"/>
    </location>
</feature>
<feature type="region of interest" description="Disordered" evidence="5">
    <location>
        <begin position="292"/>
        <end position="451"/>
    </location>
</feature>
<feature type="region of interest" description="Disordered" evidence="5">
    <location>
        <begin position="566"/>
        <end position="595"/>
    </location>
</feature>
<feature type="region of interest" description="Disordered" evidence="5">
    <location>
        <begin position="670"/>
        <end position="738"/>
    </location>
</feature>
<feature type="compositionally biased region" description="Gly residues" evidence="5">
    <location>
        <begin position="52"/>
        <end position="70"/>
    </location>
</feature>
<feature type="compositionally biased region" description="Gly residues" evidence="5">
    <location>
        <begin position="81"/>
        <end position="98"/>
    </location>
</feature>
<feature type="compositionally biased region" description="Basic and acidic residues" evidence="5">
    <location>
        <begin position="109"/>
        <end position="118"/>
    </location>
</feature>
<feature type="compositionally biased region" description="Gly residues" evidence="5">
    <location>
        <begin position="301"/>
        <end position="311"/>
    </location>
</feature>
<feature type="compositionally biased region" description="Polar residues" evidence="5">
    <location>
        <begin position="342"/>
        <end position="358"/>
    </location>
</feature>
<feature type="compositionally biased region" description="Low complexity" evidence="5">
    <location>
        <begin position="368"/>
        <end position="377"/>
    </location>
</feature>
<feature type="compositionally biased region" description="Polar residues" evidence="5">
    <location>
        <begin position="383"/>
        <end position="401"/>
    </location>
</feature>
<feature type="compositionally biased region" description="Low complexity" evidence="5">
    <location>
        <begin position="435"/>
        <end position="451"/>
    </location>
</feature>
<feature type="compositionally biased region" description="Polar residues" evidence="5">
    <location>
        <begin position="575"/>
        <end position="595"/>
    </location>
</feature>
<feature type="compositionally biased region" description="Low complexity" evidence="5">
    <location>
        <begin position="683"/>
        <end position="706"/>
    </location>
</feature>
<feature type="compositionally biased region" description="Polar residues" evidence="5">
    <location>
        <begin position="723"/>
        <end position="732"/>
    </location>
</feature>
<organism>
    <name type="scientific">Oryza sativa subsp. indica</name>
    <name type="common">Rice</name>
    <dbReference type="NCBI Taxonomy" id="39946"/>
    <lineage>
        <taxon>Eukaryota</taxon>
        <taxon>Viridiplantae</taxon>
        <taxon>Streptophyta</taxon>
        <taxon>Embryophyta</taxon>
        <taxon>Tracheophyta</taxon>
        <taxon>Spermatophyta</taxon>
        <taxon>Magnoliopsida</taxon>
        <taxon>Liliopsida</taxon>
        <taxon>Poales</taxon>
        <taxon>Poaceae</taxon>
        <taxon>BOP clade</taxon>
        <taxon>Oryzoideae</taxon>
        <taxon>Oryzeae</taxon>
        <taxon>Oryzinae</taxon>
        <taxon>Oryza</taxon>
        <taxon>Oryza sativa</taxon>
    </lineage>
</organism>
<dbReference type="EMBL" id="CM000134">
    <property type="protein sequence ID" value="EEC84106.1"/>
    <property type="status" value="ALT_SEQ"/>
    <property type="molecule type" value="Genomic_DNA"/>
</dbReference>
<dbReference type="SMR" id="B8BCZ8"/>
<dbReference type="STRING" id="39946.B8BCZ8"/>
<dbReference type="EnsemblPlants" id="OsKYG_09g0001040.03">
    <property type="protein sequence ID" value="OsKYG_09g0001040.03"/>
    <property type="gene ID" value="OsKYG_09g0001040"/>
</dbReference>
<dbReference type="EnsemblPlants" id="OsLiXu_09g0001070.02">
    <property type="protein sequence ID" value="OsLiXu_09g0001070.02"/>
    <property type="gene ID" value="OsLiXu_09g0001070"/>
</dbReference>
<dbReference type="EnsemblPlants" id="OsLiXu_09g0001070.04">
    <property type="protein sequence ID" value="OsLiXu_09g0001070.04"/>
    <property type="gene ID" value="OsLiXu_09g0001070"/>
</dbReference>
<dbReference type="EnsemblPlants" id="OsLiXu_Ung0048490.01">
    <property type="protein sequence ID" value="OsLiXu_Ung0048490.01"/>
    <property type="gene ID" value="OsLiXu_Ung0048490"/>
</dbReference>
<dbReference type="EnsemblPlants" id="OsLiXu_Ung0048490.03">
    <property type="protein sequence ID" value="OsLiXu_Ung0048490.03"/>
    <property type="gene ID" value="OsLiXu_Ung0048490"/>
</dbReference>
<dbReference type="EnsemblPlants" id="OsPr106_09g0001120.03">
    <property type="protein sequence ID" value="OsPr106_09g0001120.03"/>
    <property type="gene ID" value="OsPr106_09g0001120"/>
</dbReference>
<dbReference type="Gramene" id="OsKYG_09g0001040.03">
    <property type="protein sequence ID" value="OsKYG_09g0001040.03"/>
    <property type="gene ID" value="OsKYG_09g0001040"/>
</dbReference>
<dbReference type="Gramene" id="OsLiXu_09g0001070.02">
    <property type="protein sequence ID" value="OsLiXu_09g0001070.02"/>
    <property type="gene ID" value="OsLiXu_09g0001070"/>
</dbReference>
<dbReference type="Gramene" id="OsLiXu_09g0001070.04">
    <property type="protein sequence ID" value="OsLiXu_09g0001070.04"/>
    <property type="gene ID" value="OsLiXu_09g0001070"/>
</dbReference>
<dbReference type="Gramene" id="OsLiXu_Ung0048490.01">
    <property type="protein sequence ID" value="OsLiXu_Ung0048490.01"/>
    <property type="gene ID" value="OsLiXu_Ung0048490"/>
</dbReference>
<dbReference type="Gramene" id="OsLiXu_Ung0048490.03">
    <property type="protein sequence ID" value="OsLiXu_Ung0048490.03"/>
    <property type="gene ID" value="OsLiXu_Ung0048490"/>
</dbReference>
<dbReference type="Gramene" id="OsPr106_09g0001120.03">
    <property type="protein sequence ID" value="OsPr106_09g0001120.03"/>
    <property type="gene ID" value="OsPr106_09g0001120"/>
</dbReference>
<dbReference type="HOGENOM" id="CLU_020343_0_0_1"/>
<dbReference type="Proteomes" id="UP000007015">
    <property type="component" value="Chromosome 9"/>
</dbReference>
<dbReference type="GO" id="GO:0005634">
    <property type="term" value="C:nucleus"/>
    <property type="evidence" value="ECO:0007669"/>
    <property type="project" value="UniProtKB-SubCell"/>
</dbReference>
<dbReference type="GO" id="GO:1990904">
    <property type="term" value="C:ribonucleoprotein complex"/>
    <property type="evidence" value="ECO:0007669"/>
    <property type="project" value="InterPro"/>
</dbReference>
<dbReference type="GO" id="GO:0003723">
    <property type="term" value="F:RNA binding"/>
    <property type="evidence" value="ECO:0007669"/>
    <property type="project" value="UniProtKB-KW"/>
</dbReference>
<dbReference type="GO" id="GO:0030154">
    <property type="term" value="P:cell differentiation"/>
    <property type="evidence" value="ECO:0007669"/>
    <property type="project" value="UniProtKB-KW"/>
</dbReference>
<dbReference type="GO" id="GO:0009908">
    <property type="term" value="P:flower development"/>
    <property type="evidence" value="ECO:0007669"/>
    <property type="project" value="UniProtKB-KW"/>
</dbReference>
<dbReference type="GO" id="GO:0008361">
    <property type="term" value="P:regulation of cell size"/>
    <property type="evidence" value="ECO:0000315"/>
    <property type="project" value="UniProtKB"/>
</dbReference>
<dbReference type="GO" id="GO:0009909">
    <property type="term" value="P:regulation of flower development"/>
    <property type="evidence" value="ECO:0000315"/>
    <property type="project" value="UniProtKB"/>
</dbReference>
<dbReference type="GO" id="GO:0080113">
    <property type="term" value="P:regulation of seed growth"/>
    <property type="evidence" value="ECO:0000315"/>
    <property type="project" value="UniProtKB"/>
</dbReference>
<dbReference type="CDD" id="cd00201">
    <property type="entry name" value="WW"/>
    <property type="match status" value="1"/>
</dbReference>
<dbReference type="FunFam" id="2.20.70.10:FF:000079">
    <property type="entry name" value="FCA gamma protein"/>
    <property type="match status" value="1"/>
</dbReference>
<dbReference type="FunFam" id="3.30.70.330:FF:000374">
    <property type="entry name" value="Flowering time control protein FCA"/>
    <property type="match status" value="1"/>
</dbReference>
<dbReference type="FunFam" id="3.30.70.330:FF:000332">
    <property type="entry name" value="flowering time control protein FCA isoform X2"/>
    <property type="match status" value="1"/>
</dbReference>
<dbReference type="Gene3D" id="2.20.70.10">
    <property type="match status" value="1"/>
</dbReference>
<dbReference type="Gene3D" id="3.30.70.330">
    <property type="match status" value="2"/>
</dbReference>
<dbReference type="InterPro" id="IPR002343">
    <property type="entry name" value="Hud_Sxl_RNA"/>
</dbReference>
<dbReference type="InterPro" id="IPR012677">
    <property type="entry name" value="Nucleotide-bd_a/b_plait_sf"/>
</dbReference>
<dbReference type="InterPro" id="IPR035979">
    <property type="entry name" value="RBD_domain_sf"/>
</dbReference>
<dbReference type="InterPro" id="IPR000504">
    <property type="entry name" value="RRM_dom"/>
</dbReference>
<dbReference type="InterPro" id="IPR001202">
    <property type="entry name" value="WW_dom"/>
</dbReference>
<dbReference type="InterPro" id="IPR036020">
    <property type="entry name" value="WW_dom_sf"/>
</dbReference>
<dbReference type="PANTHER" id="PTHR24012">
    <property type="entry name" value="RNA BINDING PROTEIN"/>
    <property type="match status" value="1"/>
</dbReference>
<dbReference type="Pfam" id="PF00076">
    <property type="entry name" value="RRM_1"/>
    <property type="match status" value="2"/>
</dbReference>
<dbReference type="Pfam" id="PF00397">
    <property type="entry name" value="WW"/>
    <property type="match status" value="1"/>
</dbReference>
<dbReference type="PRINTS" id="PR00961">
    <property type="entry name" value="HUDSXLRNA"/>
</dbReference>
<dbReference type="SMART" id="SM00360">
    <property type="entry name" value="RRM"/>
    <property type="match status" value="2"/>
</dbReference>
<dbReference type="SMART" id="SM00456">
    <property type="entry name" value="WW"/>
    <property type="match status" value="1"/>
</dbReference>
<dbReference type="SUPFAM" id="SSF54928">
    <property type="entry name" value="RNA-binding domain, RBD"/>
    <property type="match status" value="2"/>
</dbReference>
<dbReference type="SUPFAM" id="SSF51045">
    <property type="entry name" value="WW domain"/>
    <property type="match status" value="1"/>
</dbReference>
<dbReference type="PROSITE" id="PS50102">
    <property type="entry name" value="RRM"/>
    <property type="match status" value="2"/>
</dbReference>
<dbReference type="PROSITE" id="PS50020">
    <property type="entry name" value="WW_DOMAIN_2"/>
    <property type="match status" value="1"/>
</dbReference>
<comment type="function">
    <text evidence="1 2 6">Plays a major role in the promotion of the transition of the vegetative meristem to reproductive development (By similarity). Required for RNA-mediated chromatin silencing of a range of loci in the genome. Cotranscriptionally recognizes aberrant RNA and marks it for silencing. Controls alternative cleavage and polyadenylation on pre-mRNAs and antisense RNAs (By similarity). Regulates flowering time, seed size and cell volume, probably via the modulation of cell size (PubMed:17597396).</text>
</comment>
<comment type="subunit">
    <text evidence="2">Interacts with FY (By similarity). Binds to SF1, FIK, RPRD1B, OsI_31983 and MADS8 (By similarity).</text>
</comment>
<comment type="subcellular location">
    <subcellularLocation>
        <location evidence="2">Nucleus</location>
    </subcellularLocation>
</comment>
<comment type="sequence caution" evidence="8">
    <conflict type="erroneous gene model prediction">
        <sequence resource="EMBL-CDS" id="EEC84106"/>
    </conflict>
</comment>
<accession>B8BCZ8</accession>
<protein>
    <recommendedName>
        <fullName evidence="8">Flowering time control protein FCA</fullName>
        <shortName evidence="8">OsFCA</shortName>
        <shortName evidence="7">rFCA</shortName>
    </recommendedName>
</protein>
<name>FCA_ORYSI</name>
<sequence>MHRGGDRSTDPSSGPAPGSRGGGDGRFGRGPSRWSSGGGGGGSGSPPHRFSRGGGGGGGDGGGGGGGGGRFHPYRGPSDHSGGGGYRSGGGGEYGEPGSGPRHRYGSGRGDHSDHDNRNNYVKLFIGSVPRTATEDDVRPLFEEHGDVVEVALIKDRKTGEQQGCCFVKYATSEEAERAIRALHNQYTLPGAMGPIQVRYADGERERHGAIEHKLFVASLNKQATAKEIEEIFAPYGHVEDVYIMKDGMRQSRGCGFVKFSSREPALAAMSALSGNYVMRGCEQPLIIRFADPKRPRPGESRGGPAFGGPGFSPRSDAALVIRPTANLDEPRGRHMPPDSWHPSSPRSAPHQFNNFGSDNPMAPKGSTVTSTTDTATFRPQMFSGNGSLSSQTAVPSSSHMGMNPPPMAQGHHLGGQQIPPLQKLPGLPQNFPVQLQNNQQGQPLQGPAQQIGQLQVPQSMGPGSFGQNMLSGQLPVSQPLMQQNASVGAVQAPSAVSNSMQAIPGQQHLPSNVAPQMLQQPVQQMPSQAPQLLLQQQAALQSSYQSSQQAIYQLQQQLQLMQQQQQSNLNHQQPTQGQPVQSSNPGAPNAIIPSNINTIPQQATSPAVPLTCNWTEHTSPEGFKYYYNSITRESKWDKPEEYVLYEQQQQQQQQQKLLLLQQHQQKLAMQQLQSPPQAQTHPAMQPVQQIPQAQQGQQQMQMKQQELNYTQLQTPGAIDPSRIQQGIQSAQERAWKS</sequence>
<keyword id="KW-0217">Developmental protein</keyword>
<keyword id="KW-0221">Differentiation</keyword>
<keyword id="KW-0287">Flowering</keyword>
<keyword id="KW-0539">Nucleus</keyword>
<keyword id="KW-1185">Reference proteome</keyword>
<keyword id="KW-0677">Repeat</keyword>
<keyword id="KW-0694">RNA-binding</keyword>
<gene>
    <name evidence="8" type="primary">FCA</name>
    <name evidence="9" type="ORF">OsI_30426</name>
</gene>
<reference key="1">
    <citation type="journal article" date="2005" name="PLoS Biol.">
        <title>The genomes of Oryza sativa: a history of duplications.</title>
        <authorList>
            <person name="Yu J."/>
            <person name="Wang J."/>
            <person name="Lin W."/>
            <person name="Li S."/>
            <person name="Li H."/>
            <person name="Zhou J."/>
            <person name="Ni P."/>
            <person name="Dong W."/>
            <person name="Hu S."/>
            <person name="Zeng C."/>
            <person name="Zhang J."/>
            <person name="Zhang Y."/>
            <person name="Li R."/>
            <person name="Xu Z."/>
            <person name="Li S."/>
            <person name="Li X."/>
            <person name="Zheng H."/>
            <person name="Cong L."/>
            <person name="Lin L."/>
            <person name="Yin J."/>
            <person name="Geng J."/>
            <person name="Li G."/>
            <person name="Shi J."/>
            <person name="Liu J."/>
            <person name="Lv H."/>
            <person name="Li J."/>
            <person name="Wang J."/>
            <person name="Deng Y."/>
            <person name="Ran L."/>
            <person name="Shi X."/>
            <person name="Wang X."/>
            <person name="Wu Q."/>
            <person name="Li C."/>
            <person name="Ren X."/>
            <person name="Wang J."/>
            <person name="Wang X."/>
            <person name="Li D."/>
            <person name="Liu D."/>
            <person name="Zhang X."/>
            <person name="Ji Z."/>
            <person name="Zhao W."/>
            <person name="Sun Y."/>
            <person name="Zhang Z."/>
            <person name="Bao J."/>
            <person name="Han Y."/>
            <person name="Dong L."/>
            <person name="Ji J."/>
            <person name="Chen P."/>
            <person name="Wu S."/>
            <person name="Liu J."/>
            <person name="Xiao Y."/>
            <person name="Bu D."/>
            <person name="Tan J."/>
            <person name="Yang L."/>
            <person name="Ye C."/>
            <person name="Zhang J."/>
            <person name="Xu J."/>
            <person name="Zhou Y."/>
            <person name="Yu Y."/>
            <person name="Zhang B."/>
            <person name="Zhuang S."/>
            <person name="Wei H."/>
            <person name="Liu B."/>
            <person name="Lei M."/>
            <person name="Yu H."/>
            <person name="Li Y."/>
            <person name="Xu H."/>
            <person name="Wei S."/>
            <person name="He X."/>
            <person name="Fang L."/>
            <person name="Zhang Z."/>
            <person name="Zhang Y."/>
            <person name="Huang X."/>
            <person name="Su Z."/>
            <person name="Tong W."/>
            <person name="Li J."/>
            <person name="Tong Z."/>
            <person name="Li S."/>
            <person name="Ye J."/>
            <person name="Wang L."/>
            <person name="Fang L."/>
            <person name="Lei T."/>
            <person name="Chen C.-S."/>
            <person name="Chen H.-C."/>
            <person name="Xu Z."/>
            <person name="Li H."/>
            <person name="Huang H."/>
            <person name="Zhang F."/>
            <person name="Xu H."/>
            <person name="Li N."/>
            <person name="Zhao C."/>
            <person name="Li S."/>
            <person name="Dong L."/>
            <person name="Huang Y."/>
            <person name="Li L."/>
            <person name="Xi Y."/>
            <person name="Qi Q."/>
            <person name="Li W."/>
            <person name="Zhang B."/>
            <person name="Hu W."/>
            <person name="Zhang Y."/>
            <person name="Tian X."/>
            <person name="Jiao Y."/>
            <person name="Liang X."/>
            <person name="Jin J."/>
            <person name="Gao L."/>
            <person name="Zheng W."/>
            <person name="Hao B."/>
            <person name="Liu S.-M."/>
            <person name="Wang W."/>
            <person name="Yuan L."/>
            <person name="Cao M."/>
            <person name="McDermott J."/>
            <person name="Samudrala R."/>
            <person name="Wang J."/>
            <person name="Wong G.K.-S."/>
            <person name="Yang H."/>
        </authorList>
    </citation>
    <scope>NUCLEOTIDE SEQUENCE [LARGE SCALE GENOMIC DNA]</scope>
    <source>
        <strain>cv. 93-11</strain>
    </source>
</reference>
<reference key="2">
    <citation type="journal article" date="2007" name="Biosci. Rep.">
        <title>Overexpression of the rFCA RNA recognition motif affects morphologies modifications in rice (Oryza sativa L.).</title>
        <authorList>
            <person name="Hong F."/>
            <person name="Attia K."/>
            <person name="Wei C."/>
            <person name="Li K."/>
            <person name="He G."/>
            <person name="Su W."/>
            <person name="Zhang Q."/>
            <person name="Qian X."/>
            <person name="Yang J."/>
        </authorList>
    </citation>
    <scope>FUNCTION</scope>
    <source>
        <strain>cv. 9311</strain>
    </source>
</reference>
<evidence type="ECO:0000250" key="1">
    <source>
        <dbReference type="UniProtKB" id="O04425"/>
    </source>
</evidence>
<evidence type="ECO:0000250" key="2">
    <source>
        <dbReference type="UniProtKB" id="Q6K271"/>
    </source>
</evidence>
<evidence type="ECO:0000255" key="3">
    <source>
        <dbReference type="PROSITE-ProRule" id="PRU00176"/>
    </source>
</evidence>
<evidence type="ECO:0000255" key="4">
    <source>
        <dbReference type="PROSITE-ProRule" id="PRU00224"/>
    </source>
</evidence>
<evidence type="ECO:0000256" key="5">
    <source>
        <dbReference type="SAM" id="MobiDB-lite"/>
    </source>
</evidence>
<evidence type="ECO:0000269" key="6">
    <source>
    </source>
</evidence>
<evidence type="ECO:0000303" key="7">
    <source>
    </source>
</evidence>
<evidence type="ECO:0000305" key="8"/>
<evidence type="ECO:0000312" key="9">
    <source>
        <dbReference type="EMBL" id="EEC84106.1"/>
    </source>
</evidence>